<reference key="1">
    <citation type="submission" date="2006-09" db="EMBL/GenBank/DDBJ databases">
        <authorList>
            <consortium name="The Klebsiella pneumonia Genome Sequencing Project"/>
            <person name="McClelland M."/>
            <person name="Sanderson E.K."/>
            <person name="Spieth J."/>
            <person name="Clifton W.S."/>
            <person name="Latreille P."/>
            <person name="Sabo A."/>
            <person name="Pepin K."/>
            <person name="Bhonagiri V."/>
            <person name="Porwollik S."/>
            <person name="Ali J."/>
            <person name="Wilson R.K."/>
        </authorList>
    </citation>
    <scope>NUCLEOTIDE SEQUENCE [LARGE SCALE GENOMIC DNA]</scope>
    <source>
        <strain>ATCC 700721 / MGH 78578</strain>
    </source>
</reference>
<proteinExistence type="inferred from homology"/>
<comment type="function">
    <text evidence="1">Catalyzes a proton abstraction reaction that results in 2,5-elimination of pyruvate from 2-succinyl-5-enolpyruvyl-6-hydroxy-3-cyclohexene-1-carboxylate (SEPHCHC) and the formation of 2-succinyl-6-hydroxy-2,4-cyclohexadiene-1-carboxylate (SHCHC).</text>
</comment>
<comment type="catalytic activity">
    <reaction evidence="1">
        <text>5-enolpyruvoyl-6-hydroxy-2-succinyl-cyclohex-3-ene-1-carboxylate = (1R,6R)-6-hydroxy-2-succinyl-cyclohexa-2,4-diene-1-carboxylate + pyruvate</text>
        <dbReference type="Rhea" id="RHEA:25597"/>
        <dbReference type="ChEBI" id="CHEBI:15361"/>
        <dbReference type="ChEBI" id="CHEBI:58689"/>
        <dbReference type="ChEBI" id="CHEBI:58818"/>
        <dbReference type="EC" id="4.2.99.20"/>
    </reaction>
</comment>
<comment type="pathway">
    <text evidence="1">Quinol/quinone metabolism; 1,4-dihydroxy-2-naphthoate biosynthesis; 1,4-dihydroxy-2-naphthoate from chorismate: step 3/7.</text>
</comment>
<comment type="pathway">
    <text evidence="1">Quinol/quinone metabolism; menaquinone biosynthesis.</text>
</comment>
<comment type="subunit">
    <text evidence="1">Monomer.</text>
</comment>
<comment type="similarity">
    <text evidence="1">Belongs to the AB hydrolase superfamily. MenH family.</text>
</comment>
<evidence type="ECO:0000255" key="1">
    <source>
        <dbReference type="HAMAP-Rule" id="MF_01660"/>
    </source>
</evidence>
<accession>A6TBV7</accession>
<protein>
    <recommendedName>
        <fullName evidence="1">2-succinyl-6-hydroxy-2,4-cyclohexadiene-1-carboxylate synthase</fullName>
        <shortName evidence="1">SHCHC synthase</shortName>
        <ecNumber evidence="1">4.2.99.20</ecNumber>
    </recommendedName>
</protein>
<organism>
    <name type="scientific">Klebsiella pneumoniae subsp. pneumoniae (strain ATCC 700721 / MGH 78578)</name>
    <dbReference type="NCBI Taxonomy" id="272620"/>
    <lineage>
        <taxon>Bacteria</taxon>
        <taxon>Pseudomonadati</taxon>
        <taxon>Pseudomonadota</taxon>
        <taxon>Gammaproteobacteria</taxon>
        <taxon>Enterobacterales</taxon>
        <taxon>Enterobacteriaceae</taxon>
        <taxon>Klebsiella/Raoultella group</taxon>
        <taxon>Klebsiella</taxon>
        <taxon>Klebsiella pneumoniae complex</taxon>
    </lineage>
</organism>
<gene>
    <name evidence="1" type="primary">menH</name>
    <name type="ordered locus">KPN78578_26170</name>
    <name type="ORF">KPN_02661</name>
</gene>
<keyword id="KW-0456">Lyase</keyword>
<keyword id="KW-0474">Menaquinone biosynthesis</keyword>
<dbReference type="EC" id="4.2.99.20" evidence="1"/>
<dbReference type="EMBL" id="CP000647">
    <property type="protein sequence ID" value="ABR78078.1"/>
    <property type="molecule type" value="Genomic_DNA"/>
</dbReference>
<dbReference type="RefSeq" id="WP_015958756.1">
    <property type="nucleotide sequence ID" value="NC_009648.1"/>
</dbReference>
<dbReference type="SMR" id="A6TBV7"/>
<dbReference type="STRING" id="272620.KPN_02661"/>
<dbReference type="ESTHER" id="klep7-menh">
    <property type="family name" value="MenH_SHCHC"/>
</dbReference>
<dbReference type="PaxDb" id="272620-KPN_02661"/>
<dbReference type="EnsemblBacteria" id="ABR78078">
    <property type="protein sequence ID" value="ABR78078"/>
    <property type="gene ID" value="KPN_02661"/>
</dbReference>
<dbReference type="KEGG" id="kpn:KPN_02661"/>
<dbReference type="HOGENOM" id="CLU_020336_38_2_6"/>
<dbReference type="UniPathway" id="UPA00079"/>
<dbReference type="UniPathway" id="UPA01057">
    <property type="reaction ID" value="UER00900"/>
</dbReference>
<dbReference type="Proteomes" id="UP000000265">
    <property type="component" value="Chromosome"/>
</dbReference>
<dbReference type="GO" id="GO:0070205">
    <property type="term" value="F:2-succinyl-6-hydroxy-2,4-cyclohexadiene-1-carboxylate synthase activity"/>
    <property type="evidence" value="ECO:0007669"/>
    <property type="project" value="UniProtKB-UniRule"/>
</dbReference>
<dbReference type="GO" id="GO:0009234">
    <property type="term" value="P:menaquinone biosynthetic process"/>
    <property type="evidence" value="ECO:0007669"/>
    <property type="project" value="UniProtKB-UniRule"/>
</dbReference>
<dbReference type="Gene3D" id="3.40.50.1820">
    <property type="entry name" value="alpha/beta hydrolase"/>
    <property type="match status" value="1"/>
</dbReference>
<dbReference type="HAMAP" id="MF_01660">
    <property type="entry name" value="MenH"/>
    <property type="match status" value="1"/>
</dbReference>
<dbReference type="InterPro" id="IPR000073">
    <property type="entry name" value="AB_hydrolase_1"/>
</dbReference>
<dbReference type="InterPro" id="IPR029058">
    <property type="entry name" value="AB_hydrolase_fold"/>
</dbReference>
<dbReference type="InterPro" id="IPR022485">
    <property type="entry name" value="SHCHC_synthase_MenH"/>
</dbReference>
<dbReference type="NCBIfam" id="TIGR03695">
    <property type="entry name" value="menH_SHCHC"/>
    <property type="match status" value="1"/>
</dbReference>
<dbReference type="NCBIfam" id="NF008340">
    <property type="entry name" value="PRK11126.1"/>
    <property type="match status" value="1"/>
</dbReference>
<dbReference type="PANTHER" id="PTHR42916">
    <property type="entry name" value="2-SUCCINYL-5-ENOLPYRUVYL-6-HYDROXY-3-CYCLOHEXENE-1-CARBOXYLATE SYNTHASE"/>
    <property type="match status" value="1"/>
</dbReference>
<dbReference type="PANTHER" id="PTHR42916:SF1">
    <property type="entry name" value="PROTEIN PHYLLO, CHLOROPLASTIC"/>
    <property type="match status" value="1"/>
</dbReference>
<dbReference type="Pfam" id="PF00561">
    <property type="entry name" value="Abhydrolase_1"/>
    <property type="match status" value="1"/>
</dbReference>
<dbReference type="SUPFAM" id="SSF53474">
    <property type="entry name" value="alpha/beta-Hydrolases"/>
    <property type="match status" value="1"/>
</dbReference>
<feature type="chain" id="PRO_0000341915" description="2-succinyl-6-hydroxy-2,4-cyclohexadiene-1-carboxylate synthase">
    <location>
        <begin position="1"/>
        <end position="252"/>
    </location>
</feature>
<name>MENH_KLEP7</name>
<sequence>MILSAAVDNGQPGYPWLVFLHGFSGDRNEWRKVGDAFPAWPRLYLDLPGHGGSADIAVQDFAGVNTLLQSTLNSYNIHKYWLIGYSLGGRVAMNFASQPRAGMRGLIVEGGHPGLQDAEARQARRSNDSAWAERFRREPLEQVFADWYQQPVFASLNAAQRESLVALRSRNNGATLAAMLQATSLAAQADLRASLQARDFPFHYLCGERDAKFRAIAQTLAADLHLIHHAGHNAHRDNPAAVIACLAQILAS</sequence>